<protein>
    <recommendedName>
        <fullName evidence="7">Versicolorin B desaturase</fullName>
        <ecNumber evidence="5">1.14.19.n5</ecNumber>
    </recommendedName>
    <alternativeName>
        <fullName evidence="6">Aflatoxin biosynthesis protein L</fullName>
    </alternativeName>
</protein>
<evidence type="ECO:0000250" key="1">
    <source>
        <dbReference type="UniProtKB" id="P04798"/>
    </source>
</evidence>
<evidence type="ECO:0000255" key="2"/>
<evidence type="ECO:0000255" key="3">
    <source>
        <dbReference type="PROSITE-ProRule" id="PRU00498"/>
    </source>
</evidence>
<evidence type="ECO:0000269" key="4">
    <source>
    </source>
</evidence>
<evidence type="ECO:0000269" key="5">
    <source>
    </source>
</evidence>
<evidence type="ECO:0000303" key="6">
    <source>
    </source>
</evidence>
<evidence type="ECO:0000303" key="7">
    <source>
    </source>
</evidence>
<evidence type="ECO:0000305" key="8"/>
<evidence type="ECO:0000305" key="9">
    <source>
    </source>
</evidence>
<evidence type="ECO:0000305" key="10">
    <source>
    </source>
</evidence>
<reference key="1">
    <citation type="journal article" date="2004" name="FEBS Lett.">
        <title>Completed sequence of aflatoxin pathway gene cluster in Aspergillus parasiticus.</title>
        <authorList>
            <person name="Yu J."/>
            <person name="Bhatnagar D."/>
            <person name="Cleveland T.E."/>
        </authorList>
    </citation>
    <scope>NUCLEOTIDE SEQUENCE [GENOMIC DNA]</scope>
    <scope>FUNCTION</scope>
    <scope>PATHWAY</scope>
    <source>
        <strain>ATCC 56775 / NRRL 5862 / SRRC 143 / SU-1</strain>
    </source>
</reference>
<reference key="2">
    <citation type="submission" date="1998-11" db="EMBL/GenBank/DDBJ databases">
        <title>Molecular characterization of an aflatoxin B2 producing mutant strain of Aspergillus flavus.</title>
        <authorList>
            <person name="Bhatnagar D."/>
            <person name="Cary J.W."/>
            <person name="Ehrlich K.C."/>
            <person name="Cleveland T.E."/>
            <person name="Payne G.A."/>
        </authorList>
    </citation>
    <scope>NUCLEOTIDE SEQUENCE [GENOMIC DNA]</scope>
    <source>
        <strain>RH1</strain>
    </source>
</reference>
<reference key="3">
    <citation type="submission" date="2015-02" db="EMBL/GenBank/DDBJ databases">
        <title>Draft genome sequence of Aspergillus parasiticus SU-1.</title>
        <authorList>
            <person name="Yu J."/>
            <person name="Fedorova N."/>
            <person name="Yin Y."/>
            <person name="Losada L."/>
            <person name="Zafar N."/>
            <person name="Taujale R."/>
            <person name="Ehrlich K.C."/>
            <person name="Bhatnagar D."/>
            <person name="Cleveland T.E."/>
            <person name="Bennett J.W."/>
            <person name="Nierman W.C."/>
        </authorList>
    </citation>
    <scope>NUCLEOTIDE SEQUENCE [LARGE SCALE GENOMIC DNA]</scope>
    <source>
        <strain>ATCC 56775 / NRRL 5862 / SRRC 143 / SU-1</strain>
    </source>
</reference>
<reference key="4">
    <citation type="journal article" date="1993" name="Appl. Environ. Microbiol.">
        <title>Stereochemistry during aflatoxin biosynthesis: cyclase reaction in the conversion of versiconal to versicolorin B and racemization of versiconal hemiacetal acetate.</title>
        <authorList>
            <person name="Yabe K."/>
            <person name="Hamasaki T."/>
        </authorList>
    </citation>
    <scope>FUNCTION</scope>
    <scope>CATALYTIC ACTIVITY</scope>
    <scope>PATHWAY</scope>
</reference>
<reference key="5">
    <citation type="journal article" date="2004" name="Appl. Environ. Microbiol.">
        <title>Clustered pathway genes in aflatoxin biosynthesis.</title>
        <authorList>
            <person name="Yu J."/>
            <person name="Chang P.K."/>
            <person name="Ehrlich K.C."/>
            <person name="Cary J.W."/>
            <person name="Bhatnagar D."/>
            <person name="Cleveland T.E."/>
            <person name="Payne G.A."/>
            <person name="Linz J.E."/>
            <person name="Woloshuk C.P."/>
            <person name="Bennett J.W."/>
        </authorList>
    </citation>
    <scope>FUNCTION</scope>
    <scope>PATHWAY</scope>
    <scope>NOMENCLATURE</scope>
</reference>
<gene>
    <name evidence="6" type="primary">aflL</name>
    <name type="synonym">verB</name>
    <name type="ORF">P875_00052996-1</name>
</gene>
<proteinExistence type="evidence at protein level"/>
<comment type="function">
    <text evidence="5 9 10">Versicolorin B desaturase; part of the gene cluster that mediates the biosynthesis of aflatoxins, a group of polyketide-derived furanocoumarins, and part of the most toxic and carcinogenic compounds among the known mycotoxins (PubMed:15006741, PubMed:15094053, PubMed:8368837). The four major aflatoxins produced by A.parasiticus are aflatoxin B1 (AFB1), aflatoxin B2 (AFB2), aflatoxin G1 (AFG1) and aflatoxin G2 (AFG2) (PubMed:15006741). Within the aflatoxin pathway, the versicolorin B desaturase aflL catalyzes the conversion of versicolorin B (VERB) to versicolorin A (VERA) (PubMed:15006741, PubMed:8368837). The biosynthesis of aflatoxins begins with the norsolorinic acid synthase aflC that combines a hexanoyl starter unit produced by the fatty acid synthase aflA/aflB and 7 malonyl-CoA extender units to synthesize the precursor NOR. The second step is the conversion of NOR to averantin and requires the norsolorinic acid ketoreductase aflD, which catalyzes the dehydration of norsolorinic acid to form (1'S)-averantin. The norsolorinic acid reductases aflE and aflF may also play a role in the conversion of NOR to AVN. The cytochrome P450 monooxygenase aflG then catalyzes the hydroxylation of AVN to 5'hydroxyaverantin (HAVN). The next step is performed by the 5'-hydroxyaverantin dehydrogenase aflH that transforms HAVN to 5'-oxoaverantin (OAVN) which is further converted to averufin (AVF) by aflK that plays a dual role in the pathway, as a 5'-oxoaverantin cyclase that mediates conversion of 5'-oxoaverantin, as well as a versicolorin B synthase in a later step in the pathway. The averufin oxidase aflI catalyzes the conversion of AVF to versiconal hemiacetal acetate (VHA). VHA is then the substrate for the versiconal hemiacetal acetate esterase aflJ to yield versiconal (VAL). Versicolorin B synthase aflK then converts VAL to versicolorin B (VERB) by closing the bisfuran ring of aflatoxin which is required for DNA-binding, thus giving to aflatoxin its activity as a mutagen. Then, the activity of the versicolorin B desaturase aflL leads to versicolorin A (VERA). A branch point starts from VERB since it can also be converted to dihydrodemethylsterigmatocystin (DMDHST), probably also by aflL, VERA being a precursor for aflatoxins B1 and G1, and DMDHST for aflatoxins B2 and G2. Next, the versicolorin reductase aflM and the cytochrome P450 monooxygenase aflN are involved in conversion of VERA to demethylsterigmatocystin (DMST). AflX and aflY seem also involved in this step, through probable aflX-mediated epoxide ring-opening step following versicolorin A oxidation and aflY-mediated Baeyer-Villiger oxidation required for the formation of the xanthone ring. The methyltransferase aflO then leads to the modification of DMST to sterigmatocystin (ST), and of DMDHST to dihydrosterigmatocystin (DHST). Both ST and DHST are then substrates of the O-methyltransferase aflP to yield O-methylsterigmatocystin (OMST) and dihydro-O-methylsterigmatocystin (DHOMST), respectively. Finally OMST is converted to aflatoxins B1 and G1, and DHOMST to aflatoxins B2 and G2, via the action of several enzymes including O-methylsterigmatocystin oxidoreductase aflQ, the cytochrome P450 monooxygenase aflU, but also the NADH-dependent flavin oxidoreductase nadA which is specifically required for the synthesis of AFG1 (PubMed:15006741).</text>
</comment>
<comment type="catalytic activity">
    <reaction evidence="5">
        <text>versicolorin B + NADPH + O2 + H(+) = versicolorin A + NADP(+) + 2 H2O</text>
        <dbReference type="Rhea" id="RHEA:35743"/>
        <dbReference type="ChEBI" id="CHEBI:15377"/>
        <dbReference type="ChEBI" id="CHEBI:15378"/>
        <dbReference type="ChEBI" id="CHEBI:15379"/>
        <dbReference type="ChEBI" id="CHEBI:57783"/>
        <dbReference type="ChEBI" id="CHEBI:58349"/>
        <dbReference type="ChEBI" id="CHEBI:77951"/>
        <dbReference type="ChEBI" id="CHEBI:77976"/>
        <dbReference type="EC" id="1.14.19.n5"/>
    </reaction>
    <physiologicalReaction direction="left-to-right" evidence="5">
        <dbReference type="Rhea" id="RHEA:35744"/>
    </physiologicalReaction>
</comment>
<comment type="cofactor">
    <cofactor evidence="1">
        <name>heme</name>
        <dbReference type="ChEBI" id="CHEBI:30413"/>
    </cofactor>
</comment>
<comment type="pathway">
    <text evidence="4 5 9">Mycotoxin biosynthesis; aflatoxin biosynthesis.</text>
</comment>
<comment type="subcellular location">
    <subcellularLocation>
        <location evidence="2">Membrane</location>
        <topology evidence="2">Single-pass membrane protein</topology>
    </subcellularLocation>
</comment>
<comment type="similarity">
    <text evidence="8">Belongs to the cytochrome P450 family.</text>
</comment>
<comment type="sequence caution" evidence="8">
    <conflict type="erroneous gene model prediction">
        <sequence resource="EMBL-CDS" id="KJK60771"/>
    </conflict>
    <text>The predicted gene P875_00052996 has been split into 2 genes: P875_00052996-1 (aflL) and P875_00052996-2 (aflG).</text>
</comment>
<dbReference type="EC" id="1.14.19.n5" evidence="5"/>
<dbReference type="EMBL" id="AY371490">
    <property type="protein sequence ID" value="AAS66013.1"/>
    <property type="molecule type" value="Genomic_DNA"/>
</dbReference>
<dbReference type="EMBL" id="AF106958">
    <property type="protein sequence ID" value="AAD50366.1"/>
    <property type="molecule type" value="Genomic_DNA"/>
</dbReference>
<dbReference type="EMBL" id="JZEE01000729">
    <property type="protein sequence ID" value="KJK60771.1"/>
    <property type="status" value="ALT_SEQ"/>
    <property type="molecule type" value="Genomic_DNA"/>
</dbReference>
<dbReference type="SMR" id="Q9UW95"/>
<dbReference type="STRING" id="1403190.Q9UW95"/>
<dbReference type="GlyCosmos" id="Q9UW95">
    <property type="glycosylation" value="2 sites, No reported glycans"/>
</dbReference>
<dbReference type="OrthoDB" id="1470350at2759"/>
<dbReference type="BioCyc" id="MetaCyc:MONOMER-14041"/>
<dbReference type="UniPathway" id="UPA00287"/>
<dbReference type="Proteomes" id="UP000033540">
    <property type="component" value="Unassembled WGS sequence"/>
</dbReference>
<dbReference type="GO" id="GO:0016020">
    <property type="term" value="C:membrane"/>
    <property type="evidence" value="ECO:0007669"/>
    <property type="project" value="UniProtKB-SubCell"/>
</dbReference>
<dbReference type="GO" id="GO:0020037">
    <property type="term" value="F:heme binding"/>
    <property type="evidence" value="ECO:0007669"/>
    <property type="project" value="InterPro"/>
</dbReference>
<dbReference type="GO" id="GO:0005506">
    <property type="term" value="F:iron ion binding"/>
    <property type="evidence" value="ECO:0007669"/>
    <property type="project" value="InterPro"/>
</dbReference>
<dbReference type="GO" id="GO:0004497">
    <property type="term" value="F:monooxygenase activity"/>
    <property type="evidence" value="ECO:0007669"/>
    <property type="project" value="UniProtKB-KW"/>
</dbReference>
<dbReference type="GO" id="GO:0016491">
    <property type="term" value="F:oxidoreductase activity"/>
    <property type="evidence" value="ECO:0000304"/>
    <property type="project" value="UniProt"/>
</dbReference>
<dbReference type="GO" id="GO:0140398">
    <property type="term" value="F:versicolorin B desaturase activity"/>
    <property type="evidence" value="ECO:0000314"/>
    <property type="project" value="UniProt"/>
</dbReference>
<dbReference type="GO" id="GO:0045122">
    <property type="term" value="P:aflatoxin biosynthetic process"/>
    <property type="evidence" value="ECO:0000314"/>
    <property type="project" value="UniProt"/>
</dbReference>
<dbReference type="CDD" id="cd11058">
    <property type="entry name" value="CYP60B-like"/>
    <property type="match status" value="1"/>
</dbReference>
<dbReference type="FunFam" id="1.10.630.10:FF:000047">
    <property type="entry name" value="Cytochrome P450 monooxygenase"/>
    <property type="match status" value="1"/>
</dbReference>
<dbReference type="Gene3D" id="1.10.630.10">
    <property type="entry name" value="Cytochrome P450"/>
    <property type="match status" value="1"/>
</dbReference>
<dbReference type="InterPro" id="IPR001128">
    <property type="entry name" value="Cyt_P450"/>
</dbReference>
<dbReference type="InterPro" id="IPR017972">
    <property type="entry name" value="Cyt_P450_CS"/>
</dbReference>
<dbReference type="InterPro" id="IPR002401">
    <property type="entry name" value="Cyt_P450_E_grp-I"/>
</dbReference>
<dbReference type="InterPro" id="IPR036396">
    <property type="entry name" value="Cyt_P450_sf"/>
</dbReference>
<dbReference type="InterPro" id="IPR050121">
    <property type="entry name" value="Cytochrome_P450_monoxygenase"/>
</dbReference>
<dbReference type="PANTHER" id="PTHR24305">
    <property type="entry name" value="CYTOCHROME P450"/>
    <property type="match status" value="1"/>
</dbReference>
<dbReference type="PANTHER" id="PTHR24305:SF210">
    <property type="entry name" value="CYTOCHROME P450 MONOOXYGENASE ASQL-RELATED"/>
    <property type="match status" value="1"/>
</dbReference>
<dbReference type="Pfam" id="PF00067">
    <property type="entry name" value="p450"/>
    <property type="match status" value="1"/>
</dbReference>
<dbReference type="PRINTS" id="PR00463">
    <property type="entry name" value="EP450I"/>
</dbReference>
<dbReference type="PRINTS" id="PR00385">
    <property type="entry name" value="P450"/>
</dbReference>
<dbReference type="SUPFAM" id="SSF48264">
    <property type="entry name" value="Cytochrome P450"/>
    <property type="match status" value="1"/>
</dbReference>
<dbReference type="PROSITE" id="PS00086">
    <property type="entry name" value="CYTOCHROME_P450"/>
    <property type="match status" value="1"/>
</dbReference>
<accession>Q9UW95</accession>
<accession>A0A0F0I0Q6</accession>
<organism>
    <name type="scientific">Aspergillus parasiticus (strain ATCC 56775 / NRRL 5862 / SRRC 143 / SU-1)</name>
    <dbReference type="NCBI Taxonomy" id="1403190"/>
    <lineage>
        <taxon>Eukaryota</taxon>
        <taxon>Fungi</taxon>
        <taxon>Dikarya</taxon>
        <taxon>Ascomycota</taxon>
        <taxon>Pezizomycotina</taxon>
        <taxon>Eurotiomycetes</taxon>
        <taxon>Eurotiomycetidae</taxon>
        <taxon>Eurotiales</taxon>
        <taxon>Aspergillaceae</taxon>
        <taxon>Aspergillus</taxon>
        <taxon>Aspergillus subgen. Circumdati</taxon>
    </lineage>
</organism>
<name>AFLL_ASPPU</name>
<keyword id="KW-0325">Glycoprotein</keyword>
<keyword id="KW-0349">Heme</keyword>
<keyword id="KW-0408">Iron</keyword>
<keyword id="KW-0472">Membrane</keyword>
<keyword id="KW-0479">Metal-binding</keyword>
<keyword id="KW-0503">Monooxygenase</keyword>
<keyword id="KW-0521">NADP</keyword>
<keyword id="KW-0560">Oxidoreductase</keyword>
<keyword id="KW-1185">Reference proteome</keyword>
<keyword id="KW-0812">Transmembrane</keyword>
<keyword id="KW-1133">Transmembrane helix</keyword>
<feature type="chain" id="PRO_0000424166" description="Versicolorin B desaturase">
    <location>
        <begin position="1"/>
        <end position="500"/>
    </location>
</feature>
<feature type="transmembrane region" description="Helical" evidence="2">
    <location>
        <begin position="3"/>
        <end position="23"/>
    </location>
</feature>
<feature type="binding site" description="axial binding residue" evidence="1">
    <location>
        <position position="438"/>
    </location>
    <ligand>
        <name>heme</name>
        <dbReference type="ChEBI" id="CHEBI:30413"/>
    </ligand>
    <ligandPart>
        <name>Fe</name>
        <dbReference type="ChEBI" id="CHEBI:18248"/>
    </ligandPart>
</feature>
<feature type="glycosylation site" description="N-linked (GlcNAc...) asparagine" evidence="3">
    <location>
        <position position="243"/>
    </location>
</feature>
<feature type="glycosylation site" description="N-linked (GlcNAc...) asparagine" evidence="3">
    <location>
        <position position="400"/>
    </location>
</feature>
<sequence>MYFLSLPSLVIVIPVGYLLFHLGYNLFFHPLRGYPGPLLWRASSLPWKIALLRGTMHHDLMRFHQKYGDTVRIKPDEISYANAQAWRDIHAHVPGRPEFLKDPVRLPLAPNGVMSILVSDTKNHARFRSLFGHAFSDKGLRTQESTIVQYADLLVEVLREVADTGRSAEMVYYFNMAIFDSIGALSFGESFDSLKSRQLHPWVDAIHKNLKSVAISHVLRSMGIEFLTPYVLPKELRGKRQENYSYAVEKLNKRMKMEGDQGDFWDKVLVKSADDNQRGDGMSAGEMLNNAAVMVVAGSETTASALSGAMYLLCLSGKIEKATAEIRKSFASPEDIDLISVSHLPYLTAVIDETLRMYPAVPGQPPRVVPASGATVCGRFVPEETRVGVSHLATYFADYNFTHADKFIPERHLQKTEEPFKYDNYGAYQPWSVGLRNCIGRNLAYAEVRLTLAKLLWHFDFTLDVDKTGNFLDQKIWSIWAKRELYMFIKTRGTSSSSPQ</sequence>